<proteinExistence type="inferred from homology"/>
<comment type="function">
    <text evidence="1">May be involved in RNA polymerase activity.</text>
</comment>
<comment type="catalytic activity">
    <reaction evidence="1">
        <text>RNA(n) + a ribonucleoside 5'-triphosphate = RNA(n+1) + diphosphate</text>
        <dbReference type="Rhea" id="RHEA:21248"/>
        <dbReference type="Rhea" id="RHEA-COMP:14527"/>
        <dbReference type="Rhea" id="RHEA-COMP:17342"/>
        <dbReference type="ChEBI" id="CHEBI:33019"/>
        <dbReference type="ChEBI" id="CHEBI:61557"/>
        <dbReference type="ChEBI" id="CHEBI:140395"/>
        <dbReference type="EC" id="2.7.7.6"/>
    </reaction>
</comment>
<comment type="subcellular location">
    <subcellularLocation>
        <location>Plastid</location>
        <location>Chloroplast</location>
    </subcellularLocation>
</comment>
<comment type="similarity">
    <text evidence="1">Belongs to the RNA polymerase subunit omega family.</text>
</comment>
<gene>
    <name evidence="1" type="primary">rpoZ</name>
</gene>
<accession>Q1XDB1</accession>
<reference key="1">
    <citation type="submission" date="2003-11" db="EMBL/GenBank/DDBJ databases">
        <title>Whole genome sequence of Porphyra yezoensis chloroplast.</title>
        <authorList>
            <person name="Kunimoto M."/>
            <person name="Morishima K."/>
            <person name="Yoshikawa M."/>
            <person name="Fukuda S."/>
            <person name="Kobayashi T."/>
            <person name="Kobayashi M."/>
            <person name="Okazaki T."/>
            <person name="Ohara I."/>
            <person name="Nakayama I."/>
        </authorList>
    </citation>
    <scope>NUCLEOTIDE SEQUENCE [LARGE SCALE GENOMIC DNA]</scope>
    <source>
        <strain>U-51</strain>
    </source>
</reference>
<name>RPOZ_PYRYE</name>
<geneLocation type="chloroplast"/>
<feature type="chain" id="PRO_0000276602" description="Putative DNA-directed RNA polymerase subunit omega">
    <location>
        <begin position="1"/>
        <end position="75"/>
    </location>
</feature>
<evidence type="ECO:0000255" key="1">
    <source>
        <dbReference type="HAMAP-Rule" id="MF_00366"/>
    </source>
</evidence>
<sequence length="75" mass="8719">MNQHNSLDSSDITYKTEELLEATTNRYKITVQVANRAKRRKYEDVDIIDDPQVKPVIRAILEMVDEITQPEIISD</sequence>
<organism>
    <name type="scientific">Pyropia yezoensis</name>
    <name type="common">Susabi-nori</name>
    <name type="synonym">Porphyra yezoensis</name>
    <dbReference type="NCBI Taxonomy" id="2788"/>
    <lineage>
        <taxon>Eukaryota</taxon>
        <taxon>Rhodophyta</taxon>
        <taxon>Bangiophyceae</taxon>
        <taxon>Bangiales</taxon>
        <taxon>Bangiaceae</taxon>
        <taxon>Pyropia</taxon>
    </lineage>
</organism>
<keyword id="KW-0150">Chloroplast</keyword>
<keyword id="KW-0240">DNA-directed RNA polymerase</keyword>
<keyword id="KW-0548">Nucleotidyltransferase</keyword>
<keyword id="KW-0934">Plastid</keyword>
<keyword id="KW-0804">Transcription</keyword>
<keyword id="KW-0808">Transferase</keyword>
<protein>
    <recommendedName>
        <fullName evidence="1">Putative DNA-directed RNA polymerase subunit omega</fullName>
        <shortName evidence="1">PEP</shortName>
        <ecNumber evidence="1">2.7.7.6</ecNumber>
    </recommendedName>
    <alternativeName>
        <fullName evidence="1">Plastid-encoded RNA polymerase omega subunit</fullName>
        <shortName evidence="1">RNA polymerase omega subunit</shortName>
    </alternativeName>
</protein>
<dbReference type="EC" id="2.7.7.6" evidence="1"/>
<dbReference type="EMBL" id="AP006715">
    <property type="protein sequence ID" value="BAE92500.1"/>
    <property type="molecule type" value="Genomic_DNA"/>
</dbReference>
<dbReference type="SMR" id="Q1XDB1"/>
<dbReference type="GO" id="GO:0009507">
    <property type="term" value="C:chloroplast"/>
    <property type="evidence" value="ECO:0007669"/>
    <property type="project" value="UniProtKB-SubCell"/>
</dbReference>
<dbReference type="GO" id="GO:0000428">
    <property type="term" value="C:DNA-directed RNA polymerase complex"/>
    <property type="evidence" value="ECO:0007669"/>
    <property type="project" value="UniProtKB-KW"/>
</dbReference>
<dbReference type="GO" id="GO:0005739">
    <property type="term" value="C:mitochondrion"/>
    <property type="evidence" value="ECO:0007669"/>
    <property type="project" value="GOC"/>
</dbReference>
<dbReference type="GO" id="GO:0003677">
    <property type="term" value="F:DNA binding"/>
    <property type="evidence" value="ECO:0007669"/>
    <property type="project" value="UniProtKB-UniRule"/>
</dbReference>
<dbReference type="GO" id="GO:0003899">
    <property type="term" value="F:DNA-directed RNA polymerase activity"/>
    <property type="evidence" value="ECO:0007669"/>
    <property type="project" value="UniProtKB-UniRule"/>
</dbReference>
<dbReference type="GO" id="GO:0006351">
    <property type="term" value="P:DNA-templated transcription"/>
    <property type="evidence" value="ECO:0007669"/>
    <property type="project" value="UniProtKB-UniRule"/>
</dbReference>
<dbReference type="HAMAP" id="MF_00366">
    <property type="entry name" value="RNApol_bact_RpoZ"/>
    <property type="match status" value="1"/>
</dbReference>
<dbReference type="InterPro" id="IPR003716">
    <property type="entry name" value="DNA-dir_RNA_pol_omega"/>
</dbReference>
<dbReference type="InterPro" id="IPR006110">
    <property type="entry name" value="Pol_omega/Rpo6/RPB6"/>
</dbReference>
<dbReference type="InterPro" id="IPR036161">
    <property type="entry name" value="RPB6/omega-like_sf"/>
</dbReference>
<dbReference type="NCBIfam" id="NF001574">
    <property type="entry name" value="PRK00392.2-5"/>
    <property type="match status" value="1"/>
</dbReference>
<dbReference type="Pfam" id="PF01192">
    <property type="entry name" value="RNA_pol_Rpb6"/>
    <property type="match status" value="1"/>
</dbReference>
<dbReference type="SUPFAM" id="SSF63562">
    <property type="entry name" value="RPB6/omega subunit-like"/>
    <property type="match status" value="1"/>
</dbReference>